<dbReference type="EC" id="6.1.1.3" evidence="1"/>
<dbReference type="EMBL" id="CP000233">
    <property type="protein sequence ID" value="ABD99303.1"/>
    <property type="molecule type" value="Genomic_DNA"/>
</dbReference>
<dbReference type="RefSeq" id="WP_011475786.1">
    <property type="nucleotide sequence ID" value="NC_007929.1"/>
</dbReference>
<dbReference type="RefSeq" id="YP_535386.1">
    <property type="nucleotide sequence ID" value="NC_007929.1"/>
</dbReference>
<dbReference type="SMR" id="Q1WUN2"/>
<dbReference type="STRING" id="362948.LSL_0494"/>
<dbReference type="KEGG" id="lsl:LSL_0494"/>
<dbReference type="PATRIC" id="fig|362948.14.peg.570"/>
<dbReference type="HOGENOM" id="CLU_008554_0_1_9"/>
<dbReference type="OrthoDB" id="9802304at2"/>
<dbReference type="Proteomes" id="UP000006559">
    <property type="component" value="Chromosome"/>
</dbReference>
<dbReference type="GO" id="GO:0005737">
    <property type="term" value="C:cytoplasm"/>
    <property type="evidence" value="ECO:0007669"/>
    <property type="project" value="UniProtKB-SubCell"/>
</dbReference>
<dbReference type="GO" id="GO:0005524">
    <property type="term" value="F:ATP binding"/>
    <property type="evidence" value="ECO:0007669"/>
    <property type="project" value="UniProtKB-UniRule"/>
</dbReference>
<dbReference type="GO" id="GO:0140096">
    <property type="term" value="F:catalytic activity, acting on a protein"/>
    <property type="evidence" value="ECO:0007669"/>
    <property type="project" value="UniProtKB-ARBA"/>
</dbReference>
<dbReference type="GO" id="GO:0046872">
    <property type="term" value="F:metal ion binding"/>
    <property type="evidence" value="ECO:0007669"/>
    <property type="project" value="UniProtKB-KW"/>
</dbReference>
<dbReference type="GO" id="GO:0004829">
    <property type="term" value="F:threonine-tRNA ligase activity"/>
    <property type="evidence" value="ECO:0007669"/>
    <property type="project" value="UniProtKB-UniRule"/>
</dbReference>
<dbReference type="GO" id="GO:0016740">
    <property type="term" value="F:transferase activity"/>
    <property type="evidence" value="ECO:0007669"/>
    <property type="project" value="UniProtKB-ARBA"/>
</dbReference>
<dbReference type="GO" id="GO:0000049">
    <property type="term" value="F:tRNA binding"/>
    <property type="evidence" value="ECO:0007669"/>
    <property type="project" value="UniProtKB-KW"/>
</dbReference>
<dbReference type="GO" id="GO:0006435">
    <property type="term" value="P:threonyl-tRNA aminoacylation"/>
    <property type="evidence" value="ECO:0007669"/>
    <property type="project" value="UniProtKB-UniRule"/>
</dbReference>
<dbReference type="CDD" id="cd01667">
    <property type="entry name" value="TGS_ThrRS"/>
    <property type="match status" value="1"/>
</dbReference>
<dbReference type="CDD" id="cd00860">
    <property type="entry name" value="ThrRS_anticodon"/>
    <property type="match status" value="1"/>
</dbReference>
<dbReference type="CDD" id="cd00771">
    <property type="entry name" value="ThrRS_core"/>
    <property type="match status" value="1"/>
</dbReference>
<dbReference type="FunFam" id="3.10.20.30:FF:000005">
    <property type="entry name" value="Threonine--tRNA ligase"/>
    <property type="match status" value="1"/>
</dbReference>
<dbReference type="FunFam" id="3.30.930.10:FF:000002">
    <property type="entry name" value="Threonine--tRNA ligase"/>
    <property type="match status" value="1"/>
</dbReference>
<dbReference type="FunFam" id="3.40.50.800:FF:000001">
    <property type="entry name" value="Threonine--tRNA ligase"/>
    <property type="match status" value="1"/>
</dbReference>
<dbReference type="FunFam" id="3.30.980.10:FF:000005">
    <property type="entry name" value="Threonyl-tRNA synthetase, mitochondrial"/>
    <property type="match status" value="1"/>
</dbReference>
<dbReference type="Gene3D" id="3.10.20.30">
    <property type="match status" value="1"/>
</dbReference>
<dbReference type="Gene3D" id="3.30.54.20">
    <property type="match status" value="1"/>
</dbReference>
<dbReference type="Gene3D" id="3.40.50.800">
    <property type="entry name" value="Anticodon-binding domain"/>
    <property type="match status" value="1"/>
</dbReference>
<dbReference type="Gene3D" id="3.30.930.10">
    <property type="entry name" value="Bira Bifunctional Protein, Domain 2"/>
    <property type="match status" value="1"/>
</dbReference>
<dbReference type="Gene3D" id="3.30.980.10">
    <property type="entry name" value="Threonyl-trna Synthetase, Chain A, domain 2"/>
    <property type="match status" value="1"/>
</dbReference>
<dbReference type="HAMAP" id="MF_00184">
    <property type="entry name" value="Thr_tRNA_synth"/>
    <property type="match status" value="1"/>
</dbReference>
<dbReference type="InterPro" id="IPR002314">
    <property type="entry name" value="aa-tRNA-synt_IIb"/>
</dbReference>
<dbReference type="InterPro" id="IPR006195">
    <property type="entry name" value="aa-tRNA-synth_II"/>
</dbReference>
<dbReference type="InterPro" id="IPR045864">
    <property type="entry name" value="aa-tRNA-synth_II/BPL/LPL"/>
</dbReference>
<dbReference type="InterPro" id="IPR004154">
    <property type="entry name" value="Anticodon-bd"/>
</dbReference>
<dbReference type="InterPro" id="IPR036621">
    <property type="entry name" value="Anticodon-bd_dom_sf"/>
</dbReference>
<dbReference type="InterPro" id="IPR012675">
    <property type="entry name" value="Beta-grasp_dom_sf"/>
</dbReference>
<dbReference type="InterPro" id="IPR004095">
    <property type="entry name" value="TGS"/>
</dbReference>
<dbReference type="InterPro" id="IPR012676">
    <property type="entry name" value="TGS-like"/>
</dbReference>
<dbReference type="InterPro" id="IPR002320">
    <property type="entry name" value="Thr-tRNA-ligase_IIa"/>
</dbReference>
<dbReference type="InterPro" id="IPR018163">
    <property type="entry name" value="Thr/Ala-tRNA-synth_IIc_edit"/>
</dbReference>
<dbReference type="InterPro" id="IPR047246">
    <property type="entry name" value="ThrRS_anticodon"/>
</dbReference>
<dbReference type="InterPro" id="IPR033728">
    <property type="entry name" value="ThrRS_core"/>
</dbReference>
<dbReference type="InterPro" id="IPR012947">
    <property type="entry name" value="tRNA_SAD"/>
</dbReference>
<dbReference type="NCBIfam" id="TIGR00418">
    <property type="entry name" value="thrS"/>
    <property type="match status" value="1"/>
</dbReference>
<dbReference type="PANTHER" id="PTHR11451:SF56">
    <property type="entry name" value="THREONINE--TRNA LIGASE 1"/>
    <property type="match status" value="1"/>
</dbReference>
<dbReference type="PANTHER" id="PTHR11451">
    <property type="entry name" value="THREONINE-TRNA LIGASE"/>
    <property type="match status" value="1"/>
</dbReference>
<dbReference type="Pfam" id="PF03129">
    <property type="entry name" value="HGTP_anticodon"/>
    <property type="match status" value="1"/>
</dbReference>
<dbReference type="Pfam" id="PF02824">
    <property type="entry name" value="TGS"/>
    <property type="match status" value="1"/>
</dbReference>
<dbReference type="Pfam" id="PF00587">
    <property type="entry name" value="tRNA-synt_2b"/>
    <property type="match status" value="1"/>
</dbReference>
<dbReference type="Pfam" id="PF07973">
    <property type="entry name" value="tRNA_SAD"/>
    <property type="match status" value="1"/>
</dbReference>
<dbReference type="PRINTS" id="PR01047">
    <property type="entry name" value="TRNASYNTHTHR"/>
</dbReference>
<dbReference type="SMART" id="SM00863">
    <property type="entry name" value="tRNA_SAD"/>
    <property type="match status" value="1"/>
</dbReference>
<dbReference type="SUPFAM" id="SSF52954">
    <property type="entry name" value="Class II aaRS ABD-related"/>
    <property type="match status" value="1"/>
</dbReference>
<dbReference type="SUPFAM" id="SSF55681">
    <property type="entry name" value="Class II aaRS and biotin synthetases"/>
    <property type="match status" value="1"/>
</dbReference>
<dbReference type="SUPFAM" id="SSF81271">
    <property type="entry name" value="TGS-like"/>
    <property type="match status" value="1"/>
</dbReference>
<dbReference type="SUPFAM" id="SSF55186">
    <property type="entry name" value="ThrRS/AlaRS common domain"/>
    <property type="match status" value="1"/>
</dbReference>
<dbReference type="PROSITE" id="PS50862">
    <property type="entry name" value="AA_TRNA_LIGASE_II"/>
    <property type="match status" value="1"/>
</dbReference>
<dbReference type="PROSITE" id="PS51880">
    <property type="entry name" value="TGS"/>
    <property type="match status" value="1"/>
</dbReference>
<organism>
    <name type="scientific">Ligilactobacillus salivarius (strain UCC118)</name>
    <name type="common">Lactobacillus salivarius</name>
    <dbReference type="NCBI Taxonomy" id="362948"/>
    <lineage>
        <taxon>Bacteria</taxon>
        <taxon>Bacillati</taxon>
        <taxon>Bacillota</taxon>
        <taxon>Bacilli</taxon>
        <taxon>Lactobacillales</taxon>
        <taxon>Lactobacillaceae</taxon>
        <taxon>Ligilactobacillus</taxon>
    </lineage>
</organism>
<gene>
    <name evidence="1" type="primary">thrS</name>
    <name type="ordered locus">LSL_0494</name>
</gene>
<proteinExistence type="inferred from homology"/>
<evidence type="ECO:0000255" key="1">
    <source>
        <dbReference type="HAMAP-Rule" id="MF_00184"/>
    </source>
</evidence>
<evidence type="ECO:0000255" key="2">
    <source>
        <dbReference type="PROSITE-ProRule" id="PRU01228"/>
    </source>
</evidence>
<reference key="1">
    <citation type="journal article" date="2006" name="Proc. Natl. Acad. Sci. U.S.A.">
        <title>Multireplicon genome architecture of Lactobacillus salivarius.</title>
        <authorList>
            <person name="Claesson M.J."/>
            <person name="Li Y."/>
            <person name="Leahy S."/>
            <person name="Canchaya C."/>
            <person name="van Pijkeren J.P."/>
            <person name="Cerdeno-Tarraga A.M."/>
            <person name="Parkhill J."/>
            <person name="Flynn S."/>
            <person name="O'Sullivan G.C."/>
            <person name="Collins J.K."/>
            <person name="Higgins D."/>
            <person name="Shanahan F."/>
            <person name="Fitzgerald G.F."/>
            <person name="van Sinderen D."/>
            <person name="O'Toole P.W."/>
        </authorList>
    </citation>
    <scope>NUCLEOTIDE SEQUENCE [LARGE SCALE GENOMIC DNA]</scope>
    <source>
        <strain>UCC118</strain>
    </source>
</reference>
<keyword id="KW-0030">Aminoacyl-tRNA synthetase</keyword>
<keyword id="KW-0067">ATP-binding</keyword>
<keyword id="KW-0963">Cytoplasm</keyword>
<keyword id="KW-0436">Ligase</keyword>
<keyword id="KW-0479">Metal-binding</keyword>
<keyword id="KW-0547">Nucleotide-binding</keyword>
<keyword id="KW-0648">Protein biosynthesis</keyword>
<keyword id="KW-1185">Reference proteome</keyword>
<keyword id="KW-0694">RNA-binding</keyword>
<keyword id="KW-0820">tRNA-binding</keyword>
<keyword id="KW-0862">Zinc</keyword>
<name>SYT_LIGS1</name>
<sequence length="649" mass="74336">MSSIKITFPDNSVKEFDAGVTTAEIAKSISISLAKKAVAGKVDGNFVDLNQPLKEDGSIEIITKDSNDGLVVLWRTAAQVLANALHELYPNMKFGMGDVTEHGFYFDTDNSESQVAETDFEKISQKMSEIIKANLPIERVEFSEEEALNLVSGDEYQEELVRDVANKNNGRVVAYKQGDFIDITDGVVLSSTGEVKIFKLLSVAGAYWKGASSNPMLQRIYGTAFYKQKDLDAELQRQKEARERDHRVIGNELDLFFVDPKVGAGLPYWMPNGATIRRVIERYIIDKEVAWGFQHVYTPVLANLNLYKQSGHWDHYREDMFPPMDMGDGEMLELRPMNCPSHIQVYNHHKRSYRELPLRIAELGMMHRYEKSGALTGLSRVREMTLNDGHDFIEPDHIEDEIKTLIKLMTEVYNDFDITDYRFRLSYRDPKNTEKYFDDDEMWEKSQSKLKAAMDDMGLEYFEAEGEAAFYGPKIDVQTKTALGGEETLSTIQLDFLLPERFDLKYIGADGEEHRPVMVHRGIVSTMERFTAYLTEMYKGAFPTWLAPHQVDIIPVKNDLHMDYVNDLSSKLRAHGIRVTVDDRNEKMGYKIRQAQVNKIPYTLVIGDEEVSNGTVTVRKYGEEKTNTMTKAEFKNLLFEDIENYSREK</sequence>
<comment type="function">
    <text evidence="1">Catalyzes the attachment of threonine to tRNA(Thr) in a two-step reaction: L-threonine is first activated by ATP to form Thr-AMP and then transferred to the acceptor end of tRNA(Thr). Also edits incorrectly charged L-seryl-tRNA(Thr).</text>
</comment>
<comment type="catalytic activity">
    <reaction evidence="1">
        <text>tRNA(Thr) + L-threonine + ATP = L-threonyl-tRNA(Thr) + AMP + diphosphate + H(+)</text>
        <dbReference type="Rhea" id="RHEA:24624"/>
        <dbReference type="Rhea" id="RHEA-COMP:9670"/>
        <dbReference type="Rhea" id="RHEA-COMP:9704"/>
        <dbReference type="ChEBI" id="CHEBI:15378"/>
        <dbReference type="ChEBI" id="CHEBI:30616"/>
        <dbReference type="ChEBI" id="CHEBI:33019"/>
        <dbReference type="ChEBI" id="CHEBI:57926"/>
        <dbReference type="ChEBI" id="CHEBI:78442"/>
        <dbReference type="ChEBI" id="CHEBI:78534"/>
        <dbReference type="ChEBI" id="CHEBI:456215"/>
        <dbReference type="EC" id="6.1.1.3"/>
    </reaction>
</comment>
<comment type="cofactor">
    <cofactor evidence="1">
        <name>Zn(2+)</name>
        <dbReference type="ChEBI" id="CHEBI:29105"/>
    </cofactor>
    <text evidence="1">Binds 1 zinc ion per subunit.</text>
</comment>
<comment type="subunit">
    <text evidence="1">Homodimer.</text>
</comment>
<comment type="subcellular location">
    <subcellularLocation>
        <location evidence="1">Cytoplasm</location>
    </subcellularLocation>
</comment>
<comment type="similarity">
    <text evidence="1">Belongs to the class-II aminoacyl-tRNA synthetase family.</text>
</comment>
<protein>
    <recommendedName>
        <fullName evidence="1">Threonine--tRNA ligase</fullName>
        <ecNumber evidence="1">6.1.1.3</ecNumber>
    </recommendedName>
    <alternativeName>
        <fullName evidence="1">Threonyl-tRNA synthetase</fullName>
        <shortName evidence="1">ThrRS</shortName>
    </alternativeName>
</protein>
<accession>Q1WUN2</accession>
<feature type="chain" id="PRO_1000020413" description="Threonine--tRNA ligase">
    <location>
        <begin position="1"/>
        <end position="649"/>
    </location>
</feature>
<feature type="domain" description="TGS" evidence="2">
    <location>
        <begin position="1"/>
        <end position="63"/>
    </location>
</feature>
<feature type="region of interest" description="Catalytic" evidence="1">
    <location>
        <begin position="245"/>
        <end position="543"/>
    </location>
</feature>
<feature type="binding site" evidence="1">
    <location>
        <position position="339"/>
    </location>
    <ligand>
        <name>Zn(2+)</name>
        <dbReference type="ChEBI" id="CHEBI:29105"/>
    </ligand>
</feature>
<feature type="binding site" evidence="1">
    <location>
        <position position="390"/>
    </location>
    <ligand>
        <name>Zn(2+)</name>
        <dbReference type="ChEBI" id="CHEBI:29105"/>
    </ligand>
</feature>
<feature type="binding site" evidence="1">
    <location>
        <position position="520"/>
    </location>
    <ligand>
        <name>Zn(2+)</name>
        <dbReference type="ChEBI" id="CHEBI:29105"/>
    </ligand>
</feature>